<organism>
    <name type="scientific">Leptospira borgpetersenii serovar Hardjo-bovis (strain JB197)</name>
    <dbReference type="NCBI Taxonomy" id="355277"/>
    <lineage>
        <taxon>Bacteria</taxon>
        <taxon>Pseudomonadati</taxon>
        <taxon>Spirochaetota</taxon>
        <taxon>Spirochaetia</taxon>
        <taxon>Leptospirales</taxon>
        <taxon>Leptospiraceae</taxon>
        <taxon>Leptospira</taxon>
    </lineage>
</organism>
<comment type="function">
    <text evidence="1">DNA-dependent RNA polymerase catalyzes the transcription of DNA into RNA using the four ribonucleoside triphosphates as substrates.</text>
</comment>
<comment type="catalytic activity">
    <reaction evidence="1">
        <text>RNA(n) + a ribonucleoside 5'-triphosphate = RNA(n+1) + diphosphate</text>
        <dbReference type="Rhea" id="RHEA:21248"/>
        <dbReference type="Rhea" id="RHEA-COMP:14527"/>
        <dbReference type="Rhea" id="RHEA-COMP:17342"/>
        <dbReference type="ChEBI" id="CHEBI:33019"/>
        <dbReference type="ChEBI" id="CHEBI:61557"/>
        <dbReference type="ChEBI" id="CHEBI:140395"/>
        <dbReference type="EC" id="2.7.7.6"/>
    </reaction>
</comment>
<comment type="subunit">
    <text evidence="1">Homodimer. The RNAP catalytic core consists of 2 alpha, 1 beta, 1 beta' and 1 omega subunit. When a sigma factor is associated with the core the holoenzyme is formed, which can initiate transcription.</text>
</comment>
<comment type="domain">
    <text evidence="1">The N-terminal domain is essential for RNAP assembly and basal transcription, whereas the C-terminal domain is involved in interaction with transcriptional regulators and with upstream promoter elements.</text>
</comment>
<comment type="similarity">
    <text evidence="1">Belongs to the RNA polymerase alpha chain family.</text>
</comment>
<accession>Q04PW5</accession>
<proteinExistence type="inferred from homology"/>
<sequence length="325" mass="36618">MSLKSLLKGFKRPKKIEFNTEASTPNYGKFVAEPFERGFATTIGNSLRRTLMSSIEGAAISAIRIEGVNHEFSFIEGVAEDVTRIILNLKQVRIKYEPEEKDQSKIIHLELKGAGYFRAGDLAVDSSIEIMNPDLHIATLNEDANLVMDLEIQRGRGYVPAEEKKKDIEVLGTIPVDSIFSPVQKVVFEVSETRVAQRSDYEKLTLEVWTDGSVSPDDAVAQAAKILKEHLTVFINFEEELEEEDDELDEADEKLKASLSKHVEELELSVRSLNVLRSLEIDFIGDLVKRSEEEMSKSKHYSDQCLQELKGKLSTLGLSFGMRDF</sequence>
<dbReference type="EC" id="2.7.7.6" evidence="1"/>
<dbReference type="EMBL" id="CP000350">
    <property type="protein sequence ID" value="ABJ77055.1"/>
    <property type="molecule type" value="Genomic_DNA"/>
</dbReference>
<dbReference type="RefSeq" id="WP_002722915.1">
    <property type="nucleotide sequence ID" value="NC_008510.1"/>
</dbReference>
<dbReference type="SMR" id="Q04PW5"/>
<dbReference type="KEGG" id="lbj:LBJ_2632"/>
<dbReference type="HOGENOM" id="CLU_053084_0_1_12"/>
<dbReference type="Proteomes" id="UP000000656">
    <property type="component" value="Chromosome 1"/>
</dbReference>
<dbReference type="GO" id="GO:0005737">
    <property type="term" value="C:cytoplasm"/>
    <property type="evidence" value="ECO:0007669"/>
    <property type="project" value="UniProtKB-ARBA"/>
</dbReference>
<dbReference type="GO" id="GO:0000428">
    <property type="term" value="C:DNA-directed RNA polymerase complex"/>
    <property type="evidence" value="ECO:0007669"/>
    <property type="project" value="UniProtKB-KW"/>
</dbReference>
<dbReference type="GO" id="GO:0003677">
    <property type="term" value="F:DNA binding"/>
    <property type="evidence" value="ECO:0007669"/>
    <property type="project" value="UniProtKB-UniRule"/>
</dbReference>
<dbReference type="GO" id="GO:0003899">
    <property type="term" value="F:DNA-directed RNA polymerase activity"/>
    <property type="evidence" value="ECO:0007669"/>
    <property type="project" value="UniProtKB-UniRule"/>
</dbReference>
<dbReference type="GO" id="GO:0046983">
    <property type="term" value="F:protein dimerization activity"/>
    <property type="evidence" value="ECO:0007669"/>
    <property type="project" value="InterPro"/>
</dbReference>
<dbReference type="GO" id="GO:0006351">
    <property type="term" value="P:DNA-templated transcription"/>
    <property type="evidence" value="ECO:0007669"/>
    <property type="project" value="UniProtKB-UniRule"/>
</dbReference>
<dbReference type="CDD" id="cd06928">
    <property type="entry name" value="RNAP_alpha_NTD"/>
    <property type="match status" value="1"/>
</dbReference>
<dbReference type="FunFam" id="1.10.150.20:FF:000047">
    <property type="entry name" value="DNA-directed RNA polymerase subunit alpha"/>
    <property type="match status" value="1"/>
</dbReference>
<dbReference type="FunFam" id="2.170.120.12:FF:000001">
    <property type="entry name" value="DNA-directed RNA polymerase subunit alpha"/>
    <property type="match status" value="1"/>
</dbReference>
<dbReference type="Gene3D" id="1.10.150.20">
    <property type="entry name" value="5' to 3' exonuclease, C-terminal subdomain"/>
    <property type="match status" value="1"/>
</dbReference>
<dbReference type="Gene3D" id="2.170.120.12">
    <property type="entry name" value="DNA-directed RNA polymerase, insert domain"/>
    <property type="match status" value="1"/>
</dbReference>
<dbReference type="Gene3D" id="3.30.1360.10">
    <property type="entry name" value="RNA polymerase, RBP11-like subunit"/>
    <property type="match status" value="1"/>
</dbReference>
<dbReference type="HAMAP" id="MF_00059">
    <property type="entry name" value="RNApol_bact_RpoA"/>
    <property type="match status" value="1"/>
</dbReference>
<dbReference type="InterPro" id="IPR011262">
    <property type="entry name" value="DNA-dir_RNA_pol_insert"/>
</dbReference>
<dbReference type="InterPro" id="IPR011263">
    <property type="entry name" value="DNA-dir_RNA_pol_RpoA/D/Rpb3"/>
</dbReference>
<dbReference type="InterPro" id="IPR011773">
    <property type="entry name" value="DNA-dir_RpoA"/>
</dbReference>
<dbReference type="InterPro" id="IPR036603">
    <property type="entry name" value="RBP11-like"/>
</dbReference>
<dbReference type="InterPro" id="IPR011260">
    <property type="entry name" value="RNAP_asu_C"/>
</dbReference>
<dbReference type="InterPro" id="IPR036643">
    <property type="entry name" value="RNApol_insert_sf"/>
</dbReference>
<dbReference type="NCBIfam" id="NF003513">
    <property type="entry name" value="PRK05182.1-2"/>
    <property type="match status" value="1"/>
</dbReference>
<dbReference type="NCBIfam" id="NF003519">
    <property type="entry name" value="PRK05182.2-5"/>
    <property type="match status" value="1"/>
</dbReference>
<dbReference type="NCBIfam" id="TIGR02027">
    <property type="entry name" value="rpoA"/>
    <property type="match status" value="1"/>
</dbReference>
<dbReference type="Pfam" id="PF01000">
    <property type="entry name" value="RNA_pol_A_bac"/>
    <property type="match status" value="1"/>
</dbReference>
<dbReference type="Pfam" id="PF03118">
    <property type="entry name" value="RNA_pol_A_CTD"/>
    <property type="match status" value="1"/>
</dbReference>
<dbReference type="Pfam" id="PF01193">
    <property type="entry name" value="RNA_pol_L"/>
    <property type="match status" value="1"/>
</dbReference>
<dbReference type="SMART" id="SM00662">
    <property type="entry name" value="RPOLD"/>
    <property type="match status" value="1"/>
</dbReference>
<dbReference type="SUPFAM" id="SSF47789">
    <property type="entry name" value="C-terminal domain of RNA polymerase alpha subunit"/>
    <property type="match status" value="1"/>
</dbReference>
<dbReference type="SUPFAM" id="SSF56553">
    <property type="entry name" value="Insert subdomain of RNA polymerase alpha subunit"/>
    <property type="match status" value="1"/>
</dbReference>
<dbReference type="SUPFAM" id="SSF55257">
    <property type="entry name" value="RBP11-like subunits of RNA polymerase"/>
    <property type="match status" value="1"/>
</dbReference>
<name>RPOA_LEPBJ</name>
<feature type="chain" id="PRO_0000296826" description="DNA-directed RNA polymerase subunit alpha">
    <location>
        <begin position="1"/>
        <end position="325"/>
    </location>
</feature>
<feature type="region of interest" description="Alpha N-terminal domain (alpha-NTD)" evidence="1">
    <location>
        <begin position="1"/>
        <end position="238"/>
    </location>
</feature>
<feature type="region of interest" description="Alpha C-terminal domain (alpha-CTD)" evidence="1">
    <location>
        <begin position="254"/>
        <end position="325"/>
    </location>
</feature>
<protein>
    <recommendedName>
        <fullName evidence="1">DNA-directed RNA polymerase subunit alpha</fullName>
        <shortName evidence="1">RNAP subunit alpha</shortName>
        <ecNumber evidence="1">2.7.7.6</ecNumber>
    </recommendedName>
    <alternativeName>
        <fullName evidence="1">RNA polymerase subunit alpha</fullName>
    </alternativeName>
    <alternativeName>
        <fullName evidence="1">Transcriptase subunit alpha</fullName>
    </alternativeName>
</protein>
<evidence type="ECO:0000255" key="1">
    <source>
        <dbReference type="HAMAP-Rule" id="MF_00059"/>
    </source>
</evidence>
<gene>
    <name evidence="1" type="primary">rpoA</name>
    <name type="ordered locus">LBJ_2632</name>
</gene>
<reference key="1">
    <citation type="journal article" date="2006" name="Proc. Natl. Acad. Sci. U.S.A.">
        <title>Genome reduction in Leptospira borgpetersenii reflects limited transmission potential.</title>
        <authorList>
            <person name="Bulach D.M."/>
            <person name="Zuerner R.L."/>
            <person name="Wilson P."/>
            <person name="Seemann T."/>
            <person name="McGrath A."/>
            <person name="Cullen P.A."/>
            <person name="Davis J."/>
            <person name="Johnson M."/>
            <person name="Kuczek E."/>
            <person name="Alt D.P."/>
            <person name="Peterson-Burch B."/>
            <person name="Coppel R.L."/>
            <person name="Rood J.I."/>
            <person name="Davies J.K."/>
            <person name="Adler B."/>
        </authorList>
    </citation>
    <scope>NUCLEOTIDE SEQUENCE [LARGE SCALE GENOMIC DNA]</scope>
    <source>
        <strain>JB197</strain>
    </source>
</reference>
<keyword id="KW-0240">DNA-directed RNA polymerase</keyword>
<keyword id="KW-0548">Nucleotidyltransferase</keyword>
<keyword id="KW-0804">Transcription</keyword>
<keyword id="KW-0808">Transferase</keyword>